<feature type="chain" id="PRO_1000060755" description="Large ribosomal subunit protein bL34">
    <location>
        <begin position="1"/>
        <end position="46"/>
    </location>
</feature>
<gene>
    <name evidence="1" type="primary">rpmH</name>
    <name type="ordered locus">EcHS_A3916</name>
</gene>
<comment type="similarity">
    <text evidence="1">Belongs to the bacterial ribosomal protein bL34 family.</text>
</comment>
<organism>
    <name type="scientific">Escherichia coli O9:H4 (strain HS)</name>
    <dbReference type="NCBI Taxonomy" id="331112"/>
    <lineage>
        <taxon>Bacteria</taxon>
        <taxon>Pseudomonadati</taxon>
        <taxon>Pseudomonadota</taxon>
        <taxon>Gammaproteobacteria</taxon>
        <taxon>Enterobacterales</taxon>
        <taxon>Enterobacteriaceae</taxon>
        <taxon>Escherichia</taxon>
    </lineage>
</organism>
<name>RL34_ECOHS</name>
<evidence type="ECO:0000255" key="1">
    <source>
        <dbReference type="HAMAP-Rule" id="MF_00391"/>
    </source>
</evidence>
<evidence type="ECO:0000305" key="2"/>
<proteinExistence type="inferred from homology"/>
<sequence length="46" mass="5380">MKRTFQPSVLKRNRSHGFRARMATKNGRQVLARRRAKGRARLTVSK</sequence>
<protein>
    <recommendedName>
        <fullName evidence="1">Large ribosomal subunit protein bL34</fullName>
    </recommendedName>
    <alternativeName>
        <fullName evidence="2">50S ribosomal protein L34</fullName>
    </alternativeName>
</protein>
<keyword id="KW-0687">Ribonucleoprotein</keyword>
<keyword id="KW-0689">Ribosomal protein</keyword>
<reference key="1">
    <citation type="journal article" date="2008" name="J. Bacteriol.">
        <title>The pangenome structure of Escherichia coli: comparative genomic analysis of E. coli commensal and pathogenic isolates.</title>
        <authorList>
            <person name="Rasko D.A."/>
            <person name="Rosovitz M.J."/>
            <person name="Myers G.S.A."/>
            <person name="Mongodin E.F."/>
            <person name="Fricke W.F."/>
            <person name="Gajer P."/>
            <person name="Crabtree J."/>
            <person name="Sebaihia M."/>
            <person name="Thomson N.R."/>
            <person name="Chaudhuri R."/>
            <person name="Henderson I.R."/>
            <person name="Sperandio V."/>
            <person name="Ravel J."/>
        </authorList>
    </citation>
    <scope>NUCLEOTIDE SEQUENCE [LARGE SCALE GENOMIC DNA]</scope>
    <source>
        <strain>HS</strain>
    </source>
</reference>
<dbReference type="EMBL" id="CP000802">
    <property type="protein sequence ID" value="ABV08118.1"/>
    <property type="molecule type" value="Genomic_DNA"/>
</dbReference>
<dbReference type="RefSeq" id="WP_000831330.1">
    <property type="nucleotide sequence ID" value="NC_009800.1"/>
</dbReference>
<dbReference type="SMR" id="A8A6G4"/>
<dbReference type="GeneID" id="98190980"/>
<dbReference type="KEGG" id="ecx:EcHS_A3916"/>
<dbReference type="HOGENOM" id="CLU_129938_2_1_6"/>
<dbReference type="GO" id="GO:1990904">
    <property type="term" value="C:ribonucleoprotein complex"/>
    <property type="evidence" value="ECO:0007669"/>
    <property type="project" value="UniProtKB-KW"/>
</dbReference>
<dbReference type="GO" id="GO:0005840">
    <property type="term" value="C:ribosome"/>
    <property type="evidence" value="ECO:0007669"/>
    <property type="project" value="UniProtKB-KW"/>
</dbReference>
<dbReference type="GO" id="GO:0003735">
    <property type="term" value="F:structural constituent of ribosome"/>
    <property type="evidence" value="ECO:0007669"/>
    <property type="project" value="InterPro"/>
</dbReference>
<dbReference type="GO" id="GO:0006412">
    <property type="term" value="P:translation"/>
    <property type="evidence" value="ECO:0007669"/>
    <property type="project" value="UniProtKB-UniRule"/>
</dbReference>
<dbReference type="FunFam" id="1.10.287.3980:FF:000001">
    <property type="entry name" value="Mitochondrial ribosomal protein L34"/>
    <property type="match status" value="1"/>
</dbReference>
<dbReference type="Gene3D" id="1.10.287.3980">
    <property type="match status" value="1"/>
</dbReference>
<dbReference type="HAMAP" id="MF_00391">
    <property type="entry name" value="Ribosomal_bL34"/>
    <property type="match status" value="1"/>
</dbReference>
<dbReference type="InterPro" id="IPR000271">
    <property type="entry name" value="Ribosomal_bL34"/>
</dbReference>
<dbReference type="InterPro" id="IPR020939">
    <property type="entry name" value="Ribosomal_bL34_CS"/>
</dbReference>
<dbReference type="NCBIfam" id="TIGR01030">
    <property type="entry name" value="rpmH_bact"/>
    <property type="match status" value="1"/>
</dbReference>
<dbReference type="PANTHER" id="PTHR14503:SF4">
    <property type="entry name" value="LARGE RIBOSOMAL SUBUNIT PROTEIN BL34M"/>
    <property type="match status" value="1"/>
</dbReference>
<dbReference type="PANTHER" id="PTHR14503">
    <property type="entry name" value="MITOCHONDRIAL RIBOSOMAL PROTEIN 34 FAMILY MEMBER"/>
    <property type="match status" value="1"/>
</dbReference>
<dbReference type="Pfam" id="PF00468">
    <property type="entry name" value="Ribosomal_L34"/>
    <property type="match status" value="1"/>
</dbReference>
<dbReference type="PROSITE" id="PS00784">
    <property type="entry name" value="RIBOSOMAL_L34"/>
    <property type="match status" value="1"/>
</dbReference>
<accession>A8A6G4</accession>